<name>MRGA8_MOUSE</name>
<dbReference type="EMBL" id="AY042198">
    <property type="protein sequence ID" value="AAK91794.1"/>
    <property type="molecule type" value="Genomic_DNA"/>
</dbReference>
<dbReference type="RefSeq" id="NP_997419.1">
    <property type="nucleotide sequence ID" value="NM_207536.1"/>
</dbReference>
<dbReference type="SMR" id="Q91ZC4"/>
<dbReference type="FunCoup" id="Q91ZC4">
    <property type="interactions" value="40"/>
</dbReference>
<dbReference type="GlyCosmos" id="Q91ZC4">
    <property type="glycosylation" value="2 sites, No reported glycans"/>
</dbReference>
<dbReference type="GlyGen" id="Q91ZC4">
    <property type="glycosylation" value="2 sites"/>
</dbReference>
<dbReference type="DNASU" id="404237"/>
<dbReference type="GeneID" id="404237"/>
<dbReference type="KEGG" id="mmu:404237"/>
<dbReference type="AGR" id="MGI:3033111"/>
<dbReference type="CTD" id="404237"/>
<dbReference type="MGI" id="MGI:3033111">
    <property type="gene designation" value="Mrgpra8"/>
</dbReference>
<dbReference type="InParanoid" id="Q91ZC4"/>
<dbReference type="PhylomeDB" id="Q91ZC4"/>
<dbReference type="PRO" id="PR:Q91ZC4"/>
<dbReference type="Proteomes" id="UP000000589">
    <property type="component" value="Unplaced"/>
</dbReference>
<dbReference type="RNAct" id="Q91ZC4">
    <property type="molecule type" value="protein"/>
</dbReference>
<dbReference type="GO" id="GO:0005886">
    <property type="term" value="C:plasma membrane"/>
    <property type="evidence" value="ECO:0007669"/>
    <property type="project" value="UniProtKB-SubCell"/>
</dbReference>
<dbReference type="GO" id="GO:0004930">
    <property type="term" value="F:G protein-coupled receptor activity"/>
    <property type="evidence" value="ECO:0007669"/>
    <property type="project" value="UniProtKB-KW"/>
</dbReference>
<dbReference type="CDD" id="cd15105">
    <property type="entry name" value="7tmA_MrgprA"/>
    <property type="match status" value="1"/>
</dbReference>
<dbReference type="FunFam" id="1.20.1070.10:FF:000140">
    <property type="entry name" value="Mas-related G-protein coupled receptor member X2"/>
    <property type="match status" value="1"/>
</dbReference>
<dbReference type="Gene3D" id="1.20.1070.10">
    <property type="entry name" value="Rhodopsin 7-helix transmembrane proteins"/>
    <property type="match status" value="1"/>
</dbReference>
<dbReference type="InterPro" id="IPR000276">
    <property type="entry name" value="GPCR_Rhodpsn"/>
</dbReference>
<dbReference type="InterPro" id="IPR017452">
    <property type="entry name" value="GPCR_Rhodpsn_7TM"/>
</dbReference>
<dbReference type="InterPro" id="IPR026233">
    <property type="entry name" value="MRGPCRA"/>
</dbReference>
<dbReference type="InterPro" id="IPR026234">
    <property type="entry name" value="MRGPCRFAMILY"/>
</dbReference>
<dbReference type="PANTHER" id="PTHR11334">
    <property type="entry name" value="MAS-RELATED G-PROTEIN COUPLED RECEPTOR"/>
    <property type="match status" value="1"/>
</dbReference>
<dbReference type="PANTHER" id="PTHR11334:SF33">
    <property type="entry name" value="MAS-RELATED GPR, MEMBER A2A-RELATED"/>
    <property type="match status" value="1"/>
</dbReference>
<dbReference type="Pfam" id="PF00001">
    <property type="entry name" value="7tm_1"/>
    <property type="match status" value="1"/>
</dbReference>
<dbReference type="PRINTS" id="PR00237">
    <property type="entry name" value="GPCRRHODOPSN"/>
</dbReference>
<dbReference type="PRINTS" id="PR02109">
    <property type="entry name" value="MRGPCRA"/>
</dbReference>
<dbReference type="PRINTS" id="PR02108">
    <property type="entry name" value="MRGPCRFAMILY"/>
</dbReference>
<dbReference type="SUPFAM" id="SSF81321">
    <property type="entry name" value="Family A G protein-coupled receptor-like"/>
    <property type="match status" value="1"/>
</dbReference>
<dbReference type="PROSITE" id="PS00237">
    <property type="entry name" value="G_PROTEIN_RECEP_F1_1"/>
    <property type="match status" value="1"/>
</dbReference>
<dbReference type="PROSITE" id="PS50262">
    <property type="entry name" value="G_PROTEIN_RECEP_F1_2"/>
    <property type="match status" value="1"/>
</dbReference>
<accession>Q91ZC4</accession>
<proteinExistence type="evidence at transcript level"/>
<keyword id="KW-1003">Cell membrane</keyword>
<keyword id="KW-0297">G-protein coupled receptor</keyword>
<keyword id="KW-0325">Glycoprotein</keyword>
<keyword id="KW-0472">Membrane</keyword>
<keyword id="KW-0675">Receptor</keyword>
<keyword id="KW-1185">Reference proteome</keyword>
<keyword id="KW-0807">Transducer</keyword>
<keyword id="KW-0812">Transmembrane</keyword>
<keyword id="KW-1133">Transmembrane helix</keyword>
<protein>
    <recommendedName>
        <fullName>Mas-related G-protein coupled receptor member A8</fullName>
    </recommendedName>
</protein>
<evidence type="ECO:0000250" key="1"/>
<evidence type="ECO:0000255" key="2"/>
<evidence type="ECO:0000255" key="3">
    <source>
        <dbReference type="PROSITE-ProRule" id="PRU00521"/>
    </source>
</evidence>
<sequence length="305" mass="35004">MDKTILGSIDIETLIRHLMIIIFGLVGLTGNAIVFWLLGFHLHRNAFLVYILNLALADFFYLLCHIINSIMFLLKVPSPNIILDHCFYTIMIVLYITGLSMLSAISTERCLSVLCPIWYRCHRPEHTSTAMCAVIWVMSLLISILNGYFCNFSSPKYVNNSVCQASDIFIRTYPIFLFVLLCLSTLALLARLFSGAGKRKFTRLFVTIMLAILVFLLCGLPLGFFWFLSPWIEDRFIVLDYRLFFASVVLTVVNSCANPIIYFFVGSFRHRLKQQTLKMFLQRALQDTPETPENMVEMSRSKAEP</sequence>
<organism>
    <name type="scientific">Mus musculus</name>
    <name type="common">Mouse</name>
    <dbReference type="NCBI Taxonomy" id="10090"/>
    <lineage>
        <taxon>Eukaryota</taxon>
        <taxon>Metazoa</taxon>
        <taxon>Chordata</taxon>
        <taxon>Craniata</taxon>
        <taxon>Vertebrata</taxon>
        <taxon>Euteleostomi</taxon>
        <taxon>Mammalia</taxon>
        <taxon>Eutheria</taxon>
        <taxon>Euarchontoglires</taxon>
        <taxon>Glires</taxon>
        <taxon>Rodentia</taxon>
        <taxon>Myomorpha</taxon>
        <taxon>Muroidea</taxon>
        <taxon>Muridae</taxon>
        <taxon>Murinae</taxon>
        <taxon>Mus</taxon>
        <taxon>Mus</taxon>
    </lineage>
</organism>
<feature type="chain" id="PRO_0000069754" description="Mas-related G-protein coupled receptor member A8">
    <location>
        <begin position="1"/>
        <end position="305"/>
    </location>
</feature>
<feature type="topological domain" description="Extracellular" evidence="2">
    <location>
        <begin position="1"/>
        <end position="17"/>
    </location>
</feature>
<feature type="transmembrane region" description="Helical; Name=1" evidence="2">
    <location>
        <begin position="18"/>
        <end position="38"/>
    </location>
</feature>
<feature type="topological domain" description="Cytoplasmic" evidence="2">
    <location>
        <begin position="39"/>
        <end position="46"/>
    </location>
</feature>
<feature type="transmembrane region" description="Helical; Name=2" evidence="2">
    <location>
        <begin position="47"/>
        <end position="67"/>
    </location>
</feature>
<feature type="topological domain" description="Extracellular" evidence="2">
    <location>
        <begin position="68"/>
        <end position="85"/>
    </location>
</feature>
<feature type="transmembrane region" description="Helical; Name=3" evidence="2">
    <location>
        <begin position="86"/>
        <end position="106"/>
    </location>
</feature>
<feature type="topological domain" description="Cytoplasmic" evidence="2">
    <location>
        <begin position="107"/>
        <end position="129"/>
    </location>
</feature>
<feature type="transmembrane region" description="Helical; Name=4" evidence="2">
    <location>
        <begin position="130"/>
        <end position="150"/>
    </location>
</feature>
<feature type="topological domain" description="Extracellular" evidence="2">
    <location>
        <begin position="151"/>
        <end position="172"/>
    </location>
</feature>
<feature type="transmembrane region" description="Helical; Name=5" evidence="2">
    <location>
        <begin position="173"/>
        <end position="193"/>
    </location>
</feature>
<feature type="topological domain" description="Cytoplasmic" evidence="2">
    <location>
        <begin position="194"/>
        <end position="207"/>
    </location>
</feature>
<feature type="transmembrane region" description="Helical; Name=6" evidence="2">
    <location>
        <begin position="208"/>
        <end position="228"/>
    </location>
</feature>
<feature type="topological domain" description="Extracellular" evidence="2">
    <location>
        <begin position="229"/>
        <end position="243"/>
    </location>
</feature>
<feature type="transmembrane region" description="Helical; Name=7" evidence="2">
    <location>
        <begin position="244"/>
        <end position="264"/>
    </location>
</feature>
<feature type="topological domain" description="Cytoplasmic" evidence="2">
    <location>
        <begin position="265"/>
        <end position="305"/>
    </location>
</feature>
<feature type="glycosylation site" description="N-linked (GlcNAc...) asparagine" evidence="2">
    <location>
        <position position="151"/>
    </location>
</feature>
<feature type="glycosylation site" description="N-linked (GlcNAc...) asparagine" evidence="2">
    <location>
        <position position="159"/>
    </location>
</feature>
<comment type="function">
    <text evidence="1">Orphan receptor. May be a receptor for RFamide-family neuropeptides such as NPFF and NPAF, which are analgesic in vivo. May regulate nociceptor function and/or development, including the sensation or modulation of pain (By similarity).</text>
</comment>
<comment type="subcellular location">
    <subcellularLocation>
        <location>Cell membrane</location>
        <topology>Multi-pass membrane protein</topology>
    </subcellularLocation>
</comment>
<comment type="tissue specificity">
    <text>Expressed in a subset of sensory neurons that includes nociceptors. Expressed in the subclass of non-peptidergic sensory neurons that are IB4(+) and VR1(-).</text>
</comment>
<comment type="similarity">
    <text evidence="3">Belongs to the G-protein coupled receptor 1 family. Mas subfamily.</text>
</comment>
<reference key="1">
    <citation type="journal article" date="2001" name="Cell">
        <title>A diverse family of GPCRs expressed in specific subsets of nociceptive sensory neurons.</title>
        <authorList>
            <person name="Dong X."/>
            <person name="Han S.-K."/>
            <person name="Zylka M.J."/>
            <person name="Simon M.I."/>
            <person name="Anderson D.J."/>
        </authorList>
    </citation>
    <scope>NUCLEOTIDE SEQUENCE [GENOMIC DNA]</scope>
    <source>
        <strain>129/SvJ</strain>
    </source>
</reference>
<gene>
    <name type="primary">Mrgpra8</name>
    <name type="synonym">Mrga8</name>
</gene>